<dbReference type="EC" id="2.3.1.191" evidence="1"/>
<dbReference type="EMBL" id="CP000768">
    <property type="protein sequence ID" value="ABS43410.1"/>
    <property type="molecule type" value="Genomic_DNA"/>
</dbReference>
<dbReference type="SMR" id="A7H3V3"/>
<dbReference type="KEGG" id="cjd:JJD26997_1093"/>
<dbReference type="HOGENOM" id="CLU_049865_0_0_7"/>
<dbReference type="UniPathway" id="UPA00973"/>
<dbReference type="Proteomes" id="UP000002302">
    <property type="component" value="Chromosome"/>
</dbReference>
<dbReference type="GO" id="GO:0016020">
    <property type="term" value="C:membrane"/>
    <property type="evidence" value="ECO:0007669"/>
    <property type="project" value="GOC"/>
</dbReference>
<dbReference type="GO" id="GO:0016410">
    <property type="term" value="F:N-acyltransferase activity"/>
    <property type="evidence" value="ECO:0007669"/>
    <property type="project" value="InterPro"/>
</dbReference>
<dbReference type="GO" id="GO:0009245">
    <property type="term" value="P:lipid A biosynthetic process"/>
    <property type="evidence" value="ECO:0007669"/>
    <property type="project" value="UniProtKB-UniRule"/>
</dbReference>
<dbReference type="CDD" id="cd03352">
    <property type="entry name" value="LbH_LpxD"/>
    <property type="match status" value="1"/>
</dbReference>
<dbReference type="Gene3D" id="2.160.10.10">
    <property type="entry name" value="Hexapeptide repeat proteins"/>
    <property type="match status" value="1"/>
</dbReference>
<dbReference type="Gene3D" id="3.40.1390.10">
    <property type="entry name" value="MurE/MurF, N-terminal domain"/>
    <property type="match status" value="1"/>
</dbReference>
<dbReference type="HAMAP" id="MF_00523">
    <property type="entry name" value="LpxD"/>
    <property type="match status" value="1"/>
</dbReference>
<dbReference type="InterPro" id="IPR001451">
    <property type="entry name" value="Hexapep"/>
</dbReference>
<dbReference type="InterPro" id="IPR018357">
    <property type="entry name" value="Hexapep_transf_CS"/>
</dbReference>
<dbReference type="InterPro" id="IPR007691">
    <property type="entry name" value="LpxD"/>
</dbReference>
<dbReference type="InterPro" id="IPR011004">
    <property type="entry name" value="Trimer_LpxA-like_sf"/>
</dbReference>
<dbReference type="InterPro" id="IPR020573">
    <property type="entry name" value="UDP_GlcNAc_AcTrfase_non-rep"/>
</dbReference>
<dbReference type="NCBIfam" id="TIGR01853">
    <property type="entry name" value="lipid_A_lpxD"/>
    <property type="match status" value="1"/>
</dbReference>
<dbReference type="NCBIfam" id="NF002060">
    <property type="entry name" value="PRK00892.1"/>
    <property type="match status" value="1"/>
</dbReference>
<dbReference type="PANTHER" id="PTHR43378">
    <property type="entry name" value="UDP-3-O-ACYLGLUCOSAMINE N-ACYLTRANSFERASE"/>
    <property type="match status" value="1"/>
</dbReference>
<dbReference type="PANTHER" id="PTHR43378:SF2">
    <property type="entry name" value="UDP-3-O-ACYLGLUCOSAMINE N-ACYLTRANSFERASE 1, MITOCHONDRIAL-RELATED"/>
    <property type="match status" value="1"/>
</dbReference>
<dbReference type="Pfam" id="PF00132">
    <property type="entry name" value="Hexapep"/>
    <property type="match status" value="1"/>
</dbReference>
<dbReference type="Pfam" id="PF14602">
    <property type="entry name" value="Hexapep_2"/>
    <property type="match status" value="1"/>
</dbReference>
<dbReference type="Pfam" id="PF04613">
    <property type="entry name" value="LpxD"/>
    <property type="match status" value="1"/>
</dbReference>
<dbReference type="SUPFAM" id="SSF51161">
    <property type="entry name" value="Trimeric LpxA-like enzymes"/>
    <property type="match status" value="1"/>
</dbReference>
<dbReference type="PROSITE" id="PS00101">
    <property type="entry name" value="HEXAPEP_TRANSFERASES"/>
    <property type="match status" value="1"/>
</dbReference>
<evidence type="ECO:0000255" key="1">
    <source>
        <dbReference type="HAMAP-Rule" id="MF_00523"/>
    </source>
</evidence>
<feature type="chain" id="PRO_1000050939" description="UDP-3-O-acylglucosamine N-acyltransferase">
    <location>
        <begin position="1"/>
        <end position="318"/>
    </location>
</feature>
<feature type="active site" description="Proton acceptor" evidence="1">
    <location>
        <position position="231"/>
    </location>
</feature>
<keyword id="KW-0012">Acyltransferase</keyword>
<keyword id="KW-0441">Lipid A biosynthesis</keyword>
<keyword id="KW-0444">Lipid biosynthesis</keyword>
<keyword id="KW-0443">Lipid metabolism</keyword>
<keyword id="KW-0677">Repeat</keyword>
<keyword id="KW-0808">Transferase</keyword>
<protein>
    <recommendedName>
        <fullName evidence="1">UDP-3-O-acylglucosamine N-acyltransferase</fullName>
        <ecNumber evidence="1">2.3.1.191</ecNumber>
    </recommendedName>
</protein>
<accession>A7H3V3</accession>
<gene>
    <name evidence="1" type="primary">lpxD</name>
    <name type="ordered locus">JJD26997_1093</name>
</gene>
<reference key="1">
    <citation type="submission" date="2007-07" db="EMBL/GenBank/DDBJ databases">
        <title>Complete genome sequence of Campylobacter jejuni subsp doylei 269.97 isolated from human blood.</title>
        <authorList>
            <person name="Fouts D.E."/>
            <person name="Mongodin E.F."/>
            <person name="Puiu D."/>
            <person name="Sebastian Y."/>
            <person name="Miller W.G."/>
            <person name="Mandrell R.E."/>
            <person name="Lastovica A.J."/>
            <person name="Nelson K.E."/>
        </authorList>
    </citation>
    <scope>NUCLEOTIDE SEQUENCE [LARGE SCALE GENOMIC DNA]</scope>
    <source>
        <strain>ATCC BAA-1458 / RM4099 / 269.97</strain>
    </source>
</reference>
<organism>
    <name type="scientific">Campylobacter jejuni subsp. doylei (strain ATCC BAA-1458 / RM4099 / 269.97)</name>
    <dbReference type="NCBI Taxonomy" id="360109"/>
    <lineage>
        <taxon>Bacteria</taxon>
        <taxon>Pseudomonadati</taxon>
        <taxon>Campylobacterota</taxon>
        <taxon>Epsilonproteobacteria</taxon>
        <taxon>Campylobacterales</taxon>
        <taxon>Campylobacteraceae</taxon>
        <taxon>Campylobacter</taxon>
    </lineage>
</organism>
<sequence>MKLSEIAEFLSLEYKGEDIEISALNSLLKANFAELTYCDGEKNTKDIPHTGAAAILVSKEYENLVPKDTKVLITQSPHLSFAFLSKLFAKPLINTAKEKVQNIAKSARIMPNVYIGDNVNIGENVIIMAGAYIGDNVSIGDESIIHPNVVIYNDTKIGKKCHLLANCVIGSDGFGYAHNKNGEHYKIYHNGNVILEDFVEVGACTTIDRAVFDSTIIKAGTKVDNLVQIGHNCNIGQNCIIVAQTGISGSSELGRNVIMGGQSATSGHLKIGDFSTIAARGGVSKNLEGGRVYGGFPIMLQKDWLKLQAKIAMKFKKD</sequence>
<name>LPXD_CAMJD</name>
<comment type="function">
    <text evidence="1">Catalyzes the N-acylation of UDP-3-O-acylglucosamine using 3-hydroxyacyl-ACP as the acyl donor. Is involved in the biosynthesis of lipid A, a phosphorylated glycolipid that anchors the lipopolysaccharide to the outer membrane of the cell.</text>
</comment>
<comment type="catalytic activity">
    <reaction evidence="1">
        <text>a UDP-3-O-[(3R)-3-hydroxyacyl]-alpha-D-glucosamine + a (3R)-hydroxyacyl-[ACP] = a UDP-2-N,3-O-bis[(3R)-3-hydroxyacyl]-alpha-D-glucosamine + holo-[ACP] + H(+)</text>
        <dbReference type="Rhea" id="RHEA:53836"/>
        <dbReference type="Rhea" id="RHEA-COMP:9685"/>
        <dbReference type="Rhea" id="RHEA-COMP:9945"/>
        <dbReference type="ChEBI" id="CHEBI:15378"/>
        <dbReference type="ChEBI" id="CHEBI:64479"/>
        <dbReference type="ChEBI" id="CHEBI:78827"/>
        <dbReference type="ChEBI" id="CHEBI:137740"/>
        <dbReference type="ChEBI" id="CHEBI:137748"/>
        <dbReference type="EC" id="2.3.1.191"/>
    </reaction>
</comment>
<comment type="pathway">
    <text evidence="1">Bacterial outer membrane biogenesis; LPS lipid A biosynthesis.</text>
</comment>
<comment type="subunit">
    <text evidence="1">Homotrimer.</text>
</comment>
<comment type="similarity">
    <text evidence="1">Belongs to the transferase hexapeptide repeat family. LpxD subfamily.</text>
</comment>
<proteinExistence type="inferred from homology"/>